<sequence length="409" mass="44714">MAEDGINSYMTGPDEQGRFGIFGGRFVSETLMPLILDLEARYEHAKTDPDFWAEMDDLWKNYVGRPSPLYFAPRLTEHLGGAKIYLKRDELNHTGAHKINNVLGQIILARRMGKTRIIAETGAGQHGVATATVCAKFGLKCVVYMGAHDVERQAPNVFRMRLLGAEVVPVTSGRGTLKDAMNDALRDWVTNVRDTFYCIGTVAGPHPYPAMVRDFQSIIGREVRWQLAEQEEGRLPDTLVAAIGGGSNAMGLFHPFLDDPSVRIVGVEAGGKGVDDRMEHCASLTGGRPGVLHGNRTYLLQDADGQILEGFSISAGLDYPGIGPEHAWLHDTGRAEYVSITDAEALEAFQLCCALEGIIPALEPSHALAHVIKIAPTLPRDHIIVMNMCGRGDKDIFTVAKHLGFDMKI</sequence>
<reference key="1">
    <citation type="journal article" date="1999" name="Genetics">
        <title>Multiple chromosomes in bacteria. The yin and yang of trp gene localization in Rhodobacter sphaeroides 2.4.1.</title>
        <authorList>
            <person name="Mackenzie C."/>
            <person name="Simmons A.E."/>
            <person name="Kaplan S."/>
        </authorList>
    </citation>
    <scope>NUCLEOTIDE SEQUENCE [GENOMIC DNA]</scope>
</reference>
<reference key="2">
    <citation type="submission" date="2005-09" db="EMBL/GenBank/DDBJ databases">
        <title>Complete sequence of chromosome 2 of Rhodobacter sphaeroides 2.4.1.</title>
        <authorList>
            <person name="Copeland A."/>
            <person name="Lucas S."/>
            <person name="Lapidus A."/>
            <person name="Barry K."/>
            <person name="Detter J.C."/>
            <person name="Glavina T."/>
            <person name="Hammon N."/>
            <person name="Israni S."/>
            <person name="Pitluck S."/>
            <person name="Richardson P."/>
            <person name="Mackenzie C."/>
            <person name="Choudhary M."/>
            <person name="Larimer F."/>
            <person name="Hauser L.J."/>
            <person name="Land M."/>
            <person name="Donohue T.J."/>
            <person name="Kaplan S."/>
        </authorList>
    </citation>
    <scope>NUCLEOTIDE SEQUENCE [LARGE SCALE GENOMIC DNA]</scope>
    <source>
        <strain>ATCC 17023 / DSM 158 / JCM 6121 / CCUG 31486 / LMG 2827 / NBRC 12203 / NCIMB 8253 / ATH 2.4.1.</strain>
    </source>
</reference>
<organism>
    <name type="scientific">Cereibacter sphaeroides (strain ATCC 17023 / DSM 158 / JCM 6121 / CCUG 31486 / LMG 2827 / NBRC 12203 / NCIMB 8253 / ATH 2.4.1.)</name>
    <name type="common">Rhodobacter sphaeroides</name>
    <dbReference type="NCBI Taxonomy" id="272943"/>
    <lineage>
        <taxon>Bacteria</taxon>
        <taxon>Pseudomonadati</taxon>
        <taxon>Pseudomonadota</taxon>
        <taxon>Alphaproteobacteria</taxon>
        <taxon>Rhodobacterales</taxon>
        <taxon>Paracoccaceae</taxon>
        <taxon>Cereibacter</taxon>
    </lineage>
</organism>
<gene>
    <name type="primary">trpB</name>
    <name type="ordered locus">RHOS4_36200</name>
    <name type="ORF">RSP_3585</name>
</gene>
<feature type="chain" id="PRO_0000098992" description="Tryptophan synthase beta chain">
    <location>
        <begin position="1"/>
        <end position="409"/>
    </location>
</feature>
<feature type="modified residue" description="N6-(pyridoxal phosphate)lysine" evidence="1">
    <location>
        <position position="98"/>
    </location>
</feature>
<accession>Q9X4E5</accession>
<accession>Q3IW96</accession>
<keyword id="KW-0028">Amino-acid biosynthesis</keyword>
<keyword id="KW-0057">Aromatic amino acid biosynthesis</keyword>
<keyword id="KW-0456">Lyase</keyword>
<keyword id="KW-0663">Pyridoxal phosphate</keyword>
<keyword id="KW-1185">Reference proteome</keyword>
<keyword id="KW-0822">Tryptophan biosynthesis</keyword>
<name>TRPB_CERS4</name>
<proteinExistence type="inferred from homology"/>
<evidence type="ECO:0000250" key="1"/>
<evidence type="ECO:0000305" key="2"/>
<protein>
    <recommendedName>
        <fullName>Tryptophan synthase beta chain</fullName>
        <ecNumber>4.2.1.20</ecNumber>
    </recommendedName>
</protein>
<dbReference type="EC" id="4.2.1.20"/>
<dbReference type="EMBL" id="AF107093">
    <property type="protein sequence ID" value="AAD29261.1"/>
    <property type="molecule type" value="Genomic_DNA"/>
</dbReference>
<dbReference type="EMBL" id="CP000144">
    <property type="protein sequence ID" value="ABA81188.1"/>
    <property type="molecule type" value="Genomic_DNA"/>
</dbReference>
<dbReference type="RefSeq" id="WP_002724529.1">
    <property type="nucleotide sequence ID" value="NZ_CP030272.1"/>
</dbReference>
<dbReference type="RefSeq" id="YP_355089.1">
    <property type="nucleotide sequence ID" value="NC_007494.2"/>
</dbReference>
<dbReference type="SMR" id="Q9X4E5"/>
<dbReference type="STRING" id="272943.RSP_3585"/>
<dbReference type="EnsemblBacteria" id="ABA81188">
    <property type="protein sequence ID" value="ABA81188"/>
    <property type="gene ID" value="RSP_3585"/>
</dbReference>
<dbReference type="GeneID" id="3722102"/>
<dbReference type="KEGG" id="rsp:RSP_3585"/>
<dbReference type="PATRIC" id="fig|272943.9.peg.4021"/>
<dbReference type="eggNOG" id="COG0133">
    <property type="taxonomic scope" value="Bacteria"/>
</dbReference>
<dbReference type="OrthoDB" id="9766131at2"/>
<dbReference type="PhylomeDB" id="Q9X4E5"/>
<dbReference type="UniPathway" id="UPA00035">
    <property type="reaction ID" value="UER00044"/>
</dbReference>
<dbReference type="Proteomes" id="UP000002703">
    <property type="component" value="Chromosome 2"/>
</dbReference>
<dbReference type="GO" id="GO:0005737">
    <property type="term" value="C:cytoplasm"/>
    <property type="evidence" value="ECO:0007669"/>
    <property type="project" value="TreeGrafter"/>
</dbReference>
<dbReference type="GO" id="GO:0004834">
    <property type="term" value="F:tryptophan synthase activity"/>
    <property type="evidence" value="ECO:0007669"/>
    <property type="project" value="UniProtKB-UniRule"/>
</dbReference>
<dbReference type="CDD" id="cd06446">
    <property type="entry name" value="Trp-synth_B"/>
    <property type="match status" value="1"/>
</dbReference>
<dbReference type="FunFam" id="3.40.50.1100:FF:000001">
    <property type="entry name" value="Tryptophan synthase beta chain"/>
    <property type="match status" value="1"/>
</dbReference>
<dbReference type="FunFam" id="3.40.50.1100:FF:000004">
    <property type="entry name" value="Tryptophan synthase beta chain"/>
    <property type="match status" value="1"/>
</dbReference>
<dbReference type="Gene3D" id="3.40.50.1100">
    <property type="match status" value="2"/>
</dbReference>
<dbReference type="HAMAP" id="MF_00133">
    <property type="entry name" value="Trp_synth_beta"/>
    <property type="match status" value="1"/>
</dbReference>
<dbReference type="InterPro" id="IPR006653">
    <property type="entry name" value="Trp_synth_b_CS"/>
</dbReference>
<dbReference type="InterPro" id="IPR006654">
    <property type="entry name" value="Trp_synth_beta"/>
</dbReference>
<dbReference type="InterPro" id="IPR023026">
    <property type="entry name" value="Trp_synth_beta/beta-like"/>
</dbReference>
<dbReference type="InterPro" id="IPR001926">
    <property type="entry name" value="TrpB-like_PALP"/>
</dbReference>
<dbReference type="InterPro" id="IPR036052">
    <property type="entry name" value="TrpB-like_PALP_sf"/>
</dbReference>
<dbReference type="NCBIfam" id="TIGR00263">
    <property type="entry name" value="trpB"/>
    <property type="match status" value="1"/>
</dbReference>
<dbReference type="PANTHER" id="PTHR48077:SF3">
    <property type="entry name" value="TRYPTOPHAN SYNTHASE"/>
    <property type="match status" value="1"/>
</dbReference>
<dbReference type="PANTHER" id="PTHR48077">
    <property type="entry name" value="TRYPTOPHAN SYNTHASE-RELATED"/>
    <property type="match status" value="1"/>
</dbReference>
<dbReference type="Pfam" id="PF00291">
    <property type="entry name" value="PALP"/>
    <property type="match status" value="1"/>
</dbReference>
<dbReference type="PIRSF" id="PIRSF001413">
    <property type="entry name" value="Trp_syn_beta"/>
    <property type="match status" value="1"/>
</dbReference>
<dbReference type="SUPFAM" id="SSF53686">
    <property type="entry name" value="Tryptophan synthase beta subunit-like PLP-dependent enzymes"/>
    <property type="match status" value="1"/>
</dbReference>
<dbReference type="PROSITE" id="PS00168">
    <property type="entry name" value="TRP_SYNTHASE_BETA"/>
    <property type="match status" value="1"/>
</dbReference>
<comment type="function">
    <text evidence="1">The beta subunit is responsible for the synthesis of L-tryptophan from indole and L-serine.</text>
</comment>
<comment type="catalytic activity">
    <reaction>
        <text>(1S,2R)-1-C-(indol-3-yl)glycerol 3-phosphate + L-serine = D-glyceraldehyde 3-phosphate + L-tryptophan + H2O</text>
        <dbReference type="Rhea" id="RHEA:10532"/>
        <dbReference type="ChEBI" id="CHEBI:15377"/>
        <dbReference type="ChEBI" id="CHEBI:33384"/>
        <dbReference type="ChEBI" id="CHEBI:57912"/>
        <dbReference type="ChEBI" id="CHEBI:58866"/>
        <dbReference type="ChEBI" id="CHEBI:59776"/>
        <dbReference type="EC" id="4.2.1.20"/>
    </reaction>
</comment>
<comment type="cofactor">
    <cofactor evidence="1">
        <name>pyridoxal 5'-phosphate</name>
        <dbReference type="ChEBI" id="CHEBI:597326"/>
    </cofactor>
</comment>
<comment type="pathway">
    <text>Amino-acid biosynthesis; L-tryptophan biosynthesis; L-tryptophan from chorismate: step 5/5.</text>
</comment>
<comment type="subunit">
    <text evidence="1">Tetramer of two alpha and two beta chains.</text>
</comment>
<comment type="similarity">
    <text evidence="2">Belongs to the TrpB family.</text>
</comment>